<feature type="chain" id="PRO_1000074486" description="Crossover junction endodeoxyribonuclease RuvC">
    <location>
        <begin position="1"/>
        <end position="173"/>
    </location>
</feature>
<feature type="active site" evidence="1">
    <location>
        <position position="8"/>
    </location>
</feature>
<feature type="active site" evidence="1">
    <location>
        <position position="67"/>
    </location>
</feature>
<feature type="active site" evidence="1">
    <location>
        <position position="139"/>
    </location>
</feature>
<feature type="binding site" evidence="1">
    <location>
        <position position="8"/>
    </location>
    <ligand>
        <name>Mg(2+)</name>
        <dbReference type="ChEBI" id="CHEBI:18420"/>
        <label>1</label>
    </ligand>
</feature>
<feature type="binding site" evidence="1">
    <location>
        <position position="67"/>
    </location>
    <ligand>
        <name>Mg(2+)</name>
        <dbReference type="ChEBI" id="CHEBI:18420"/>
        <label>2</label>
    </ligand>
</feature>
<feature type="binding site" evidence="1">
    <location>
        <position position="139"/>
    </location>
    <ligand>
        <name>Mg(2+)</name>
        <dbReference type="ChEBI" id="CHEBI:18420"/>
        <label>1</label>
    </ligand>
</feature>
<comment type="function">
    <text evidence="1">The RuvA-RuvB-RuvC complex processes Holliday junction (HJ) DNA during genetic recombination and DNA repair. Endonuclease that resolves HJ intermediates. Cleaves cruciform DNA by making single-stranded nicks across the HJ at symmetrical positions within the homologous arms, yielding a 5'-phosphate and a 3'-hydroxyl group; requires a central core of homology in the junction. The consensus cleavage sequence is 5'-(A/T)TT(C/G)-3'. Cleavage occurs on the 3'-side of the TT dinucleotide at the point of strand exchange. HJ branch migration catalyzed by RuvA-RuvB allows RuvC to scan DNA until it finds its consensus sequence, where it cleaves and resolves the cruciform DNA.</text>
</comment>
<comment type="catalytic activity">
    <reaction evidence="1">
        <text>Endonucleolytic cleavage at a junction such as a reciprocal single-stranded crossover between two homologous DNA duplexes (Holliday junction).</text>
        <dbReference type="EC" id="3.1.21.10"/>
    </reaction>
</comment>
<comment type="cofactor">
    <cofactor evidence="1">
        <name>Mg(2+)</name>
        <dbReference type="ChEBI" id="CHEBI:18420"/>
    </cofactor>
    <text evidence="1">Binds 2 Mg(2+) ion per subunit.</text>
</comment>
<comment type="subunit">
    <text evidence="1">Homodimer which binds Holliday junction (HJ) DNA. The HJ becomes 2-fold symmetrical on binding to RuvC with unstacked arms; it has a different conformation from HJ DNA in complex with RuvA. In the full resolvosome a probable DNA-RuvA(4)-RuvB(12)-RuvC(2) complex forms which resolves the HJ.</text>
</comment>
<comment type="subcellular location">
    <subcellularLocation>
        <location evidence="1">Cytoplasm</location>
    </subcellularLocation>
</comment>
<comment type="similarity">
    <text evidence="1">Belongs to the RuvC family.</text>
</comment>
<dbReference type="EC" id="3.1.21.10" evidence="1"/>
<dbReference type="EMBL" id="CP000946">
    <property type="protein sequence ID" value="ACA77419.1"/>
    <property type="molecule type" value="Genomic_DNA"/>
</dbReference>
<dbReference type="RefSeq" id="WP_001295503.1">
    <property type="nucleotide sequence ID" value="NZ_MTFT01000011.1"/>
</dbReference>
<dbReference type="SMR" id="B1J0M5"/>
<dbReference type="GeneID" id="89516631"/>
<dbReference type="KEGG" id="ecl:EcolC_1769"/>
<dbReference type="HOGENOM" id="CLU_091257_2_1_6"/>
<dbReference type="GO" id="GO:0005737">
    <property type="term" value="C:cytoplasm"/>
    <property type="evidence" value="ECO:0007669"/>
    <property type="project" value="UniProtKB-SubCell"/>
</dbReference>
<dbReference type="GO" id="GO:0048476">
    <property type="term" value="C:Holliday junction resolvase complex"/>
    <property type="evidence" value="ECO:0007669"/>
    <property type="project" value="UniProtKB-UniRule"/>
</dbReference>
<dbReference type="GO" id="GO:0008821">
    <property type="term" value="F:crossover junction DNA endonuclease activity"/>
    <property type="evidence" value="ECO:0007669"/>
    <property type="project" value="UniProtKB-UniRule"/>
</dbReference>
<dbReference type="GO" id="GO:0003677">
    <property type="term" value="F:DNA binding"/>
    <property type="evidence" value="ECO:0007669"/>
    <property type="project" value="UniProtKB-KW"/>
</dbReference>
<dbReference type="GO" id="GO:0000287">
    <property type="term" value="F:magnesium ion binding"/>
    <property type="evidence" value="ECO:0007669"/>
    <property type="project" value="UniProtKB-UniRule"/>
</dbReference>
<dbReference type="GO" id="GO:0006310">
    <property type="term" value="P:DNA recombination"/>
    <property type="evidence" value="ECO:0007669"/>
    <property type="project" value="UniProtKB-UniRule"/>
</dbReference>
<dbReference type="GO" id="GO:0006281">
    <property type="term" value="P:DNA repair"/>
    <property type="evidence" value="ECO:0007669"/>
    <property type="project" value="UniProtKB-UniRule"/>
</dbReference>
<dbReference type="CDD" id="cd16962">
    <property type="entry name" value="RuvC"/>
    <property type="match status" value="1"/>
</dbReference>
<dbReference type="FunFam" id="3.30.420.10:FF:000002">
    <property type="entry name" value="Crossover junction endodeoxyribonuclease RuvC"/>
    <property type="match status" value="1"/>
</dbReference>
<dbReference type="Gene3D" id="3.30.420.10">
    <property type="entry name" value="Ribonuclease H-like superfamily/Ribonuclease H"/>
    <property type="match status" value="1"/>
</dbReference>
<dbReference type="HAMAP" id="MF_00034">
    <property type="entry name" value="RuvC"/>
    <property type="match status" value="1"/>
</dbReference>
<dbReference type="InterPro" id="IPR012337">
    <property type="entry name" value="RNaseH-like_sf"/>
</dbReference>
<dbReference type="InterPro" id="IPR036397">
    <property type="entry name" value="RNaseH_sf"/>
</dbReference>
<dbReference type="InterPro" id="IPR020563">
    <property type="entry name" value="X-over_junc_endoDNase_Mg_BS"/>
</dbReference>
<dbReference type="InterPro" id="IPR002176">
    <property type="entry name" value="X-over_junc_endoDNase_RuvC"/>
</dbReference>
<dbReference type="NCBIfam" id="NF000711">
    <property type="entry name" value="PRK00039.2-1"/>
    <property type="match status" value="1"/>
</dbReference>
<dbReference type="NCBIfam" id="TIGR00228">
    <property type="entry name" value="ruvC"/>
    <property type="match status" value="1"/>
</dbReference>
<dbReference type="PANTHER" id="PTHR30194">
    <property type="entry name" value="CROSSOVER JUNCTION ENDODEOXYRIBONUCLEASE RUVC"/>
    <property type="match status" value="1"/>
</dbReference>
<dbReference type="PANTHER" id="PTHR30194:SF3">
    <property type="entry name" value="CROSSOVER JUNCTION ENDODEOXYRIBONUCLEASE RUVC"/>
    <property type="match status" value="1"/>
</dbReference>
<dbReference type="Pfam" id="PF02075">
    <property type="entry name" value="RuvC"/>
    <property type="match status" value="1"/>
</dbReference>
<dbReference type="PRINTS" id="PR00696">
    <property type="entry name" value="RSOLVASERUVC"/>
</dbReference>
<dbReference type="SUPFAM" id="SSF53098">
    <property type="entry name" value="Ribonuclease H-like"/>
    <property type="match status" value="1"/>
</dbReference>
<dbReference type="PROSITE" id="PS01321">
    <property type="entry name" value="RUVC"/>
    <property type="match status" value="1"/>
</dbReference>
<gene>
    <name evidence="1" type="primary">ruvC</name>
    <name type="ordered locus">EcolC_1769</name>
</gene>
<organism>
    <name type="scientific">Escherichia coli (strain ATCC 8739 / DSM 1576 / NBRC 3972 / NCIMB 8545 / WDCM 00012 / Crooks)</name>
    <dbReference type="NCBI Taxonomy" id="481805"/>
    <lineage>
        <taxon>Bacteria</taxon>
        <taxon>Pseudomonadati</taxon>
        <taxon>Pseudomonadota</taxon>
        <taxon>Gammaproteobacteria</taxon>
        <taxon>Enterobacterales</taxon>
        <taxon>Enterobacteriaceae</taxon>
        <taxon>Escherichia</taxon>
    </lineage>
</organism>
<evidence type="ECO:0000255" key="1">
    <source>
        <dbReference type="HAMAP-Rule" id="MF_00034"/>
    </source>
</evidence>
<name>RUVC_ECOLC</name>
<keyword id="KW-0963">Cytoplasm</keyword>
<keyword id="KW-0227">DNA damage</keyword>
<keyword id="KW-0233">DNA recombination</keyword>
<keyword id="KW-0234">DNA repair</keyword>
<keyword id="KW-0238">DNA-binding</keyword>
<keyword id="KW-0255">Endonuclease</keyword>
<keyword id="KW-0378">Hydrolase</keyword>
<keyword id="KW-0460">Magnesium</keyword>
<keyword id="KW-0479">Metal-binding</keyword>
<keyword id="KW-0540">Nuclease</keyword>
<proteinExistence type="inferred from homology"/>
<protein>
    <recommendedName>
        <fullName evidence="1">Crossover junction endodeoxyribonuclease RuvC</fullName>
        <ecNumber evidence="1">3.1.21.10</ecNumber>
    </recommendedName>
    <alternativeName>
        <fullName evidence="1">Holliday junction nuclease RuvC</fullName>
    </alternativeName>
    <alternativeName>
        <fullName evidence="1">Holliday junction resolvase RuvC</fullName>
    </alternativeName>
</protein>
<reference key="1">
    <citation type="submission" date="2008-02" db="EMBL/GenBank/DDBJ databases">
        <title>Complete sequence of Escherichia coli C str. ATCC 8739.</title>
        <authorList>
            <person name="Copeland A."/>
            <person name="Lucas S."/>
            <person name="Lapidus A."/>
            <person name="Glavina del Rio T."/>
            <person name="Dalin E."/>
            <person name="Tice H."/>
            <person name="Bruce D."/>
            <person name="Goodwin L."/>
            <person name="Pitluck S."/>
            <person name="Kiss H."/>
            <person name="Brettin T."/>
            <person name="Detter J.C."/>
            <person name="Han C."/>
            <person name="Kuske C.R."/>
            <person name="Schmutz J."/>
            <person name="Larimer F."/>
            <person name="Land M."/>
            <person name="Hauser L."/>
            <person name="Kyrpides N."/>
            <person name="Mikhailova N."/>
            <person name="Ingram L."/>
            <person name="Richardson P."/>
        </authorList>
    </citation>
    <scope>NUCLEOTIDE SEQUENCE [LARGE SCALE GENOMIC DNA]</scope>
    <source>
        <strain>ATCC 8739 / DSM 1576 / NBRC 3972 / NCIMB 8545 / WDCM 00012 / Crooks</strain>
    </source>
</reference>
<sequence>MAIILGIDPGSRVTGYGVIRQVGRQLSYLGSGCIRTKVDDLPSRLKLIYAGVTEIITQFQPDYFAIEQVFMAKNADSALKLGQARGVAIVAAVNQELPVFEYAARQVKQTVVGIGSAEKSQVQHMVRTLLKLPANPQADAADALAIAITHCHVSQNAMQMSESRLNLARGRLR</sequence>
<accession>B1J0M5</accession>